<sequence>MEIIRGAPALSAFRVQQLMKACDAAAIPVRHIYAEFMHFAHLTNALNDTQTLQLASILTYGPAIEAHTPKGQLYLVTPRPGTISPWSSKATDIAHNCGLSQIKRLERGIAYYVEADTLDASQQKALQALLYDRMVEVIFDDMAAAETLFDRTEPKALASVNVLGEGRRALEVANSRLGLALAEDEIDYLVDNFVRLKRNPNDIELMMFAQANSEHCRHKIFNADWTIDGVVQDKSLFKMIKNTYAVTPDNVLSAYKDNAAVMTGSVAGRFFPDETGVYAYHVEPCHILMKVETHNHPTAISPYAGAATGSGGEIRDEGATGRGSKPKAGLVGFSVSNLNIPGFIQPWEAQYGKPERIVTPLEIMLEGPLGGAAFNNEFGRPALVGYFRTYEQEVSSHNGVEVRGYHKPIMLAGGLGNIREDHVQKGEITVGAKLIVLGGPAMNIGLGGGAASSMASGQSSEDLDFASVQRENPEMERRCQEVIDRCWQLGDDNPIQFIHDVGAGGLSNAFPELVNDADRGGRFNLRNVPSDEPGMSPLEIWCNESQERYVLSVAPENLARFEQICLRERAPFAVVGEATSEQHLTLADSHFNNKPIDLPLEVLLGKAPKMSRDVVSKKALSPALDESQITVDEAVTRILSLPTVADKSFLITIGDRSVTGLVNRDQMVGPWQVPVADCAVTAASFDTYAGEAMSIGERTPLALLDFGASARMAVAESIMNIAGTDIGSFKRIKLSANWMSAAGHPGEDAGLYEAVKAVGEELCPQLEITIPVGKDSMSMKTAWEDNGVHKSVTSPMSLVITAFGVVQDIRNTVTPELRSDKGDTALLLLDLSHGKTRLGGSCLAQVFSSLGDVAPDLDDSTTLKGFFEVMQTLVADQSILAYHDRSDGGLFTTVTEMAFAGNTGAEIDLSALQGSDLARLFNEELGAVIQVSQAQAEAITAQFIAAGVACHAIGGLTEHNKLVVKDGSRVVFQQQRSELRRLWSQTSYKMQALRDNPDCALEEFSLKQSETDPGLTVKLNFDPSQDVAAPYILKGIAPKMAILREQGVNSHVEMAAAFDRAGFESRDVHMSDILSGRISLDEFQGLVACGGFSYGDVLGAGEGWAKSILFNQRARDEFSRFFERDLSFALGVCNGCQMLSNLKEIIPGSEHWPRFVRNRSERFEARVSLVEVQQSPSLFFEGMAGSRMPIAVSHGEGLAEFASMQAMTAAESTGTVALRYVTGTGEIATQYPQNPNGSPNGLSGICSTDGKVTIMMPHPERVFRTVANSWHPDNWGEDSPWMRMFRNARVKLG</sequence>
<proteinExistence type="inferred from homology"/>
<protein>
    <recommendedName>
        <fullName evidence="1">Phosphoribosylformylglycinamidine synthase</fullName>
        <shortName evidence="1">FGAM synthase</shortName>
        <shortName evidence="1">FGAMS</shortName>
        <ecNumber evidence="1">6.3.5.3</ecNumber>
    </recommendedName>
    <alternativeName>
        <fullName evidence="1">Formylglycinamide ribonucleotide amidotransferase</fullName>
        <shortName evidence="1">FGAR amidotransferase</shortName>
        <shortName evidence="1">FGAR-AT</shortName>
    </alternativeName>
</protein>
<keyword id="KW-0067">ATP-binding</keyword>
<keyword id="KW-0963">Cytoplasm</keyword>
<keyword id="KW-0315">Glutamine amidotransferase</keyword>
<keyword id="KW-0436">Ligase</keyword>
<keyword id="KW-0460">Magnesium</keyword>
<keyword id="KW-0479">Metal-binding</keyword>
<keyword id="KW-0547">Nucleotide-binding</keyword>
<keyword id="KW-0658">Purine biosynthesis</keyword>
<keyword id="KW-1185">Reference proteome</keyword>
<gene>
    <name evidence="1" type="primary">purL</name>
    <name type="ordered locus">Sden_1273</name>
</gene>
<name>PUR4_SHEDO</name>
<evidence type="ECO:0000255" key="1">
    <source>
        <dbReference type="HAMAP-Rule" id="MF_00419"/>
    </source>
</evidence>
<feature type="chain" id="PRO_0000264593" description="Phosphoribosylformylglycinamidine synthase">
    <location>
        <begin position="1"/>
        <end position="1293"/>
    </location>
</feature>
<feature type="domain" description="Glutamine amidotransferase type-1" evidence="1">
    <location>
        <begin position="1040"/>
        <end position="1293"/>
    </location>
</feature>
<feature type="active site" description="Nucleophile" evidence="1">
    <location>
        <position position="1133"/>
    </location>
</feature>
<feature type="active site" evidence="1">
    <location>
        <position position="1258"/>
    </location>
</feature>
<feature type="active site" evidence="1">
    <location>
        <position position="1260"/>
    </location>
</feature>
<feature type="binding site" evidence="1">
    <location>
        <begin position="305"/>
        <end position="316"/>
    </location>
    <ligand>
        <name>ATP</name>
        <dbReference type="ChEBI" id="CHEBI:30616"/>
    </ligand>
</feature>
<feature type="binding site" evidence="1">
    <location>
        <position position="676"/>
    </location>
    <ligand>
        <name>ATP</name>
        <dbReference type="ChEBI" id="CHEBI:30616"/>
    </ligand>
</feature>
<feature type="binding site" evidence="1">
    <location>
        <position position="677"/>
    </location>
    <ligand>
        <name>Mg(2+)</name>
        <dbReference type="ChEBI" id="CHEBI:18420"/>
    </ligand>
</feature>
<feature type="binding site" evidence="1">
    <location>
        <position position="716"/>
    </location>
    <ligand>
        <name>Mg(2+)</name>
        <dbReference type="ChEBI" id="CHEBI:18420"/>
    </ligand>
</feature>
<feature type="binding site" evidence="1">
    <location>
        <position position="720"/>
    </location>
    <ligand>
        <name>Mg(2+)</name>
        <dbReference type="ChEBI" id="CHEBI:18420"/>
    </ligand>
</feature>
<feature type="binding site" evidence="1">
    <location>
        <position position="884"/>
    </location>
    <ligand>
        <name>Mg(2+)</name>
        <dbReference type="ChEBI" id="CHEBI:18420"/>
    </ligand>
</feature>
<feature type="binding site" evidence="1">
    <location>
        <position position="886"/>
    </location>
    <ligand>
        <name>ATP</name>
        <dbReference type="ChEBI" id="CHEBI:30616"/>
    </ligand>
</feature>
<comment type="function">
    <text evidence="1">Phosphoribosylformylglycinamidine synthase involved in the purines biosynthetic pathway. Catalyzes the ATP-dependent conversion of formylglycinamide ribonucleotide (FGAR) and glutamine to yield formylglycinamidine ribonucleotide (FGAM) and glutamate.</text>
</comment>
<comment type="catalytic activity">
    <reaction evidence="1">
        <text>N(2)-formyl-N(1)-(5-phospho-beta-D-ribosyl)glycinamide + L-glutamine + ATP + H2O = 2-formamido-N(1)-(5-O-phospho-beta-D-ribosyl)acetamidine + L-glutamate + ADP + phosphate + H(+)</text>
        <dbReference type="Rhea" id="RHEA:17129"/>
        <dbReference type="ChEBI" id="CHEBI:15377"/>
        <dbReference type="ChEBI" id="CHEBI:15378"/>
        <dbReference type="ChEBI" id="CHEBI:29985"/>
        <dbReference type="ChEBI" id="CHEBI:30616"/>
        <dbReference type="ChEBI" id="CHEBI:43474"/>
        <dbReference type="ChEBI" id="CHEBI:58359"/>
        <dbReference type="ChEBI" id="CHEBI:147286"/>
        <dbReference type="ChEBI" id="CHEBI:147287"/>
        <dbReference type="ChEBI" id="CHEBI:456216"/>
        <dbReference type="EC" id="6.3.5.3"/>
    </reaction>
</comment>
<comment type="pathway">
    <text evidence="1">Purine metabolism; IMP biosynthesis via de novo pathway; 5-amino-1-(5-phospho-D-ribosyl)imidazole from N(2)-formyl-N(1)-(5-phospho-D-ribosyl)glycinamide: step 1/2.</text>
</comment>
<comment type="subunit">
    <text evidence="1">Monomer.</text>
</comment>
<comment type="subcellular location">
    <subcellularLocation>
        <location evidence="1">Cytoplasm</location>
    </subcellularLocation>
</comment>
<comment type="similarity">
    <text evidence="1">In the N-terminal section; belongs to the FGAMS family.</text>
</comment>
<dbReference type="EC" id="6.3.5.3" evidence="1"/>
<dbReference type="EMBL" id="CP000302">
    <property type="protein sequence ID" value="ABE54559.1"/>
    <property type="molecule type" value="Genomic_DNA"/>
</dbReference>
<dbReference type="RefSeq" id="WP_011495718.1">
    <property type="nucleotide sequence ID" value="NC_007954.1"/>
</dbReference>
<dbReference type="SMR" id="Q12PR7"/>
<dbReference type="STRING" id="318161.Sden_1273"/>
<dbReference type="MEROPS" id="C56.972"/>
<dbReference type="KEGG" id="sdn:Sden_1273"/>
<dbReference type="eggNOG" id="COG0046">
    <property type="taxonomic scope" value="Bacteria"/>
</dbReference>
<dbReference type="eggNOG" id="COG0047">
    <property type="taxonomic scope" value="Bacteria"/>
</dbReference>
<dbReference type="HOGENOM" id="CLU_001031_0_2_6"/>
<dbReference type="OrthoDB" id="9804441at2"/>
<dbReference type="UniPathway" id="UPA00074">
    <property type="reaction ID" value="UER00128"/>
</dbReference>
<dbReference type="Proteomes" id="UP000001982">
    <property type="component" value="Chromosome"/>
</dbReference>
<dbReference type="GO" id="GO:0005737">
    <property type="term" value="C:cytoplasm"/>
    <property type="evidence" value="ECO:0007669"/>
    <property type="project" value="UniProtKB-SubCell"/>
</dbReference>
<dbReference type="GO" id="GO:0005524">
    <property type="term" value="F:ATP binding"/>
    <property type="evidence" value="ECO:0007669"/>
    <property type="project" value="UniProtKB-UniRule"/>
</dbReference>
<dbReference type="GO" id="GO:0046872">
    <property type="term" value="F:metal ion binding"/>
    <property type="evidence" value="ECO:0007669"/>
    <property type="project" value="UniProtKB-KW"/>
</dbReference>
<dbReference type="GO" id="GO:0004642">
    <property type="term" value="F:phosphoribosylformylglycinamidine synthase activity"/>
    <property type="evidence" value="ECO:0007669"/>
    <property type="project" value="UniProtKB-UniRule"/>
</dbReference>
<dbReference type="GO" id="GO:0006189">
    <property type="term" value="P:'de novo' IMP biosynthetic process"/>
    <property type="evidence" value="ECO:0007669"/>
    <property type="project" value="UniProtKB-UniRule"/>
</dbReference>
<dbReference type="CDD" id="cd01740">
    <property type="entry name" value="GATase1_FGAR_AT"/>
    <property type="match status" value="1"/>
</dbReference>
<dbReference type="CDD" id="cd02203">
    <property type="entry name" value="PurL_repeat1"/>
    <property type="match status" value="1"/>
</dbReference>
<dbReference type="CDD" id="cd02204">
    <property type="entry name" value="PurL_repeat2"/>
    <property type="match status" value="1"/>
</dbReference>
<dbReference type="FunFam" id="1.10.8.750:FF:000002">
    <property type="entry name" value="Phosphoribosylformylglycinamidine synthase"/>
    <property type="match status" value="1"/>
</dbReference>
<dbReference type="FunFam" id="3.30.1330.10:FF:000002">
    <property type="entry name" value="Phosphoribosylformylglycinamidine synthase"/>
    <property type="match status" value="1"/>
</dbReference>
<dbReference type="FunFam" id="3.30.1330.10:FF:000005">
    <property type="entry name" value="Phosphoribosylformylglycinamidine synthase"/>
    <property type="match status" value="1"/>
</dbReference>
<dbReference type="FunFam" id="3.40.50.880:FF:000008">
    <property type="entry name" value="Phosphoribosylformylglycinamidine synthase"/>
    <property type="match status" value="1"/>
</dbReference>
<dbReference type="FunFam" id="3.90.650.10:FF:000002">
    <property type="entry name" value="Phosphoribosylformylglycinamidine synthase"/>
    <property type="match status" value="1"/>
</dbReference>
<dbReference type="FunFam" id="3.90.650.10:FF:000005">
    <property type="entry name" value="Phosphoribosylformylglycinamidine synthase"/>
    <property type="match status" value="1"/>
</dbReference>
<dbReference type="Gene3D" id="3.40.50.880">
    <property type="match status" value="1"/>
</dbReference>
<dbReference type="Gene3D" id="1.10.8.750">
    <property type="entry name" value="Phosphoribosylformylglycinamidine synthase, linker domain"/>
    <property type="match status" value="1"/>
</dbReference>
<dbReference type="Gene3D" id="3.90.650.10">
    <property type="entry name" value="PurM-like C-terminal domain"/>
    <property type="match status" value="2"/>
</dbReference>
<dbReference type="Gene3D" id="3.30.1330.10">
    <property type="entry name" value="PurM-like, N-terminal domain"/>
    <property type="match status" value="2"/>
</dbReference>
<dbReference type="HAMAP" id="MF_00419">
    <property type="entry name" value="PurL_1"/>
    <property type="match status" value="1"/>
</dbReference>
<dbReference type="InterPro" id="IPR029062">
    <property type="entry name" value="Class_I_gatase-like"/>
</dbReference>
<dbReference type="InterPro" id="IPR040707">
    <property type="entry name" value="FGAR-AT_N"/>
</dbReference>
<dbReference type="InterPro" id="IPR055181">
    <property type="entry name" value="FGAR-AT_PurM_N-like"/>
</dbReference>
<dbReference type="InterPro" id="IPR010073">
    <property type="entry name" value="PurL_large"/>
</dbReference>
<dbReference type="InterPro" id="IPR041609">
    <property type="entry name" value="PurL_linker"/>
</dbReference>
<dbReference type="InterPro" id="IPR010918">
    <property type="entry name" value="PurM-like_C_dom"/>
</dbReference>
<dbReference type="InterPro" id="IPR036676">
    <property type="entry name" value="PurM-like_C_sf"/>
</dbReference>
<dbReference type="InterPro" id="IPR036921">
    <property type="entry name" value="PurM-like_N_sf"/>
</dbReference>
<dbReference type="InterPro" id="IPR036604">
    <property type="entry name" value="PurS-like_sf"/>
</dbReference>
<dbReference type="NCBIfam" id="TIGR01735">
    <property type="entry name" value="FGAM_synt"/>
    <property type="match status" value="1"/>
</dbReference>
<dbReference type="NCBIfam" id="NF003672">
    <property type="entry name" value="PRK05297.1"/>
    <property type="match status" value="1"/>
</dbReference>
<dbReference type="PANTHER" id="PTHR10099">
    <property type="entry name" value="PHOSPHORIBOSYLFORMYLGLYCINAMIDINE SYNTHASE"/>
    <property type="match status" value="1"/>
</dbReference>
<dbReference type="PANTHER" id="PTHR10099:SF1">
    <property type="entry name" value="PHOSPHORIBOSYLFORMYLGLYCINAMIDINE SYNTHASE"/>
    <property type="match status" value="1"/>
</dbReference>
<dbReference type="Pfam" id="PF02769">
    <property type="entry name" value="AIRS_C"/>
    <property type="match status" value="2"/>
</dbReference>
<dbReference type="Pfam" id="PF18072">
    <property type="entry name" value="FGAR-AT_linker"/>
    <property type="match status" value="1"/>
</dbReference>
<dbReference type="Pfam" id="PF18076">
    <property type="entry name" value="FGAR-AT_N"/>
    <property type="match status" value="1"/>
</dbReference>
<dbReference type="Pfam" id="PF22689">
    <property type="entry name" value="FGAR-AT_PurM_N-like"/>
    <property type="match status" value="1"/>
</dbReference>
<dbReference type="Pfam" id="PF13507">
    <property type="entry name" value="GATase_5"/>
    <property type="match status" value="1"/>
</dbReference>
<dbReference type="SMART" id="SM01211">
    <property type="entry name" value="GATase_5"/>
    <property type="match status" value="1"/>
</dbReference>
<dbReference type="SUPFAM" id="SSF52317">
    <property type="entry name" value="Class I glutamine amidotransferase-like"/>
    <property type="match status" value="1"/>
</dbReference>
<dbReference type="SUPFAM" id="SSF109736">
    <property type="entry name" value="FGAM synthase PurL, linker domain"/>
    <property type="match status" value="1"/>
</dbReference>
<dbReference type="SUPFAM" id="SSF56042">
    <property type="entry name" value="PurM C-terminal domain-like"/>
    <property type="match status" value="2"/>
</dbReference>
<dbReference type="SUPFAM" id="SSF55326">
    <property type="entry name" value="PurM N-terminal domain-like"/>
    <property type="match status" value="2"/>
</dbReference>
<dbReference type="SUPFAM" id="SSF82697">
    <property type="entry name" value="PurS-like"/>
    <property type="match status" value="1"/>
</dbReference>
<dbReference type="PROSITE" id="PS51273">
    <property type="entry name" value="GATASE_TYPE_1"/>
    <property type="match status" value="1"/>
</dbReference>
<organism>
    <name type="scientific">Shewanella denitrificans (strain OS217 / ATCC BAA-1090 / DSM 15013)</name>
    <dbReference type="NCBI Taxonomy" id="318161"/>
    <lineage>
        <taxon>Bacteria</taxon>
        <taxon>Pseudomonadati</taxon>
        <taxon>Pseudomonadota</taxon>
        <taxon>Gammaproteobacteria</taxon>
        <taxon>Alteromonadales</taxon>
        <taxon>Shewanellaceae</taxon>
        <taxon>Shewanella</taxon>
    </lineage>
</organism>
<reference key="1">
    <citation type="submission" date="2006-03" db="EMBL/GenBank/DDBJ databases">
        <title>Complete sequence of Shewanella denitrificans OS217.</title>
        <authorList>
            <consortium name="US DOE Joint Genome Institute"/>
            <person name="Copeland A."/>
            <person name="Lucas S."/>
            <person name="Lapidus A."/>
            <person name="Barry K."/>
            <person name="Detter J.C."/>
            <person name="Glavina del Rio T."/>
            <person name="Hammon N."/>
            <person name="Israni S."/>
            <person name="Dalin E."/>
            <person name="Tice H."/>
            <person name="Pitluck S."/>
            <person name="Brettin T."/>
            <person name="Bruce D."/>
            <person name="Han C."/>
            <person name="Tapia R."/>
            <person name="Gilna P."/>
            <person name="Kiss H."/>
            <person name="Schmutz J."/>
            <person name="Larimer F."/>
            <person name="Land M."/>
            <person name="Hauser L."/>
            <person name="Kyrpides N."/>
            <person name="Lykidis A."/>
            <person name="Richardson P."/>
        </authorList>
    </citation>
    <scope>NUCLEOTIDE SEQUENCE [LARGE SCALE GENOMIC DNA]</scope>
    <source>
        <strain>OS217 / ATCC BAA-1090 / DSM 15013</strain>
    </source>
</reference>
<accession>Q12PR7</accession>